<organism>
    <name type="scientific">Helicobacter pylori (strain P12)</name>
    <dbReference type="NCBI Taxonomy" id="570508"/>
    <lineage>
        <taxon>Bacteria</taxon>
        <taxon>Pseudomonadati</taxon>
        <taxon>Campylobacterota</taxon>
        <taxon>Epsilonproteobacteria</taxon>
        <taxon>Campylobacterales</taxon>
        <taxon>Helicobacteraceae</taxon>
        <taxon>Helicobacter</taxon>
    </lineage>
</organism>
<accession>B6JKI8</accession>
<gene>
    <name evidence="1" type="primary">xseA</name>
    <name type="ordered locus">HPP12_0258</name>
</gene>
<feature type="chain" id="PRO_1000122065" description="Exodeoxyribonuclease 7 large subunit">
    <location>
        <begin position="1"/>
        <end position="420"/>
    </location>
</feature>
<name>EX7L_HELP2</name>
<proteinExistence type="inferred from homology"/>
<sequence>MDVLSVSEINAQIKALLEATFLQVRVQGEVSNLTIHKVSGHAYFSLKDSQSVIRCVLFKGNANRLKFALKEGQEMVVFGGISVYVPRGDYQINCFEIEPKEIGSLTLALEQLKEKLRLKGYFDEANKLPKPHFPKRVAVITSQNSAAWADMKKIASKRWPMCELVCINTLMQGEGCVQSVVESIAYADSLHDTKNAFDAIVVARGGGSMEDLYSFNDEKIADALYLAKTFSMSAIGHESDFLLSDLVADLRASTPSNAMEILLPNSDEWLQKLDGFNVKLHRSFKILLHQKKAYLEHLADFLKRLSFENKHHLNALKLEKLKIALENKTLEFLRFKKTLLEKISTQTLTSPFLQTKTERLNALENALKLAHANLKLPQFGAFLSKNNQAIELEALKRGDKIELSNEKARASAEILSVDRV</sequence>
<reference key="1">
    <citation type="submission" date="2008-10" db="EMBL/GenBank/DDBJ databases">
        <title>The complete genome sequence of Helicobacter pylori strain P12.</title>
        <authorList>
            <person name="Fischer W."/>
            <person name="Windhager L."/>
            <person name="Karnholz A."/>
            <person name="Zeiller M."/>
            <person name="Zimmer R."/>
            <person name="Haas R."/>
        </authorList>
    </citation>
    <scope>NUCLEOTIDE SEQUENCE [LARGE SCALE GENOMIC DNA]</scope>
    <source>
        <strain>P12</strain>
    </source>
</reference>
<comment type="function">
    <text evidence="1">Bidirectionally degrades single-stranded DNA into large acid-insoluble oligonucleotides, which are then degraded further into small acid-soluble oligonucleotides.</text>
</comment>
<comment type="catalytic activity">
    <reaction evidence="1">
        <text>Exonucleolytic cleavage in either 5'- to 3'- or 3'- to 5'-direction to yield nucleoside 5'-phosphates.</text>
        <dbReference type="EC" id="3.1.11.6"/>
    </reaction>
</comment>
<comment type="subunit">
    <text evidence="1">Heterooligomer composed of large and small subunits.</text>
</comment>
<comment type="subcellular location">
    <subcellularLocation>
        <location evidence="1">Cytoplasm</location>
    </subcellularLocation>
</comment>
<comment type="similarity">
    <text evidence="1">Belongs to the XseA family.</text>
</comment>
<evidence type="ECO:0000255" key="1">
    <source>
        <dbReference type="HAMAP-Rule" id="MF_00378"/>
    </source>
</evidence>
<dbReference type="EC" id="3.1.11.6" evidence="1"/>
<dbReference type="EMBL" id="CP001217">
    <property type="protein sequence ID" value="ACJ07416.1"/>
    <property type="molecule type" value="Genomic_DNA"/>
</dbReference>
<dbReference type="SMR" id="B6JKI8"/>
<dbReference type="KEGG" id="hpp:HPP12_0258"/>
<dbReference type="HOGENOM" id="CLU_023625_2_0_7"/>
<dbReference type="Proteomes" id="UP000008198">
    <property type="component" value="Chromosome"/>
</dbReference>
<dbReference type="GO" id="GO:0005737">
    <property type="term" value="C:cytoplasm"/>
    <property type="evidence" value="ECO:0007669"/>
    <property type="project" value="UniProtKB-SubCell"/>
</dbReference>
<dbReference type="GO" id="GO:0009318">
    <property type="term" value="C:exodeoxyribonuclease VII complex"/>
    <property type="evidence" value="ECO:0007669"/>
    <property type="project" value="InterPro"/>
</dbReference>
<dbReference type="GO" id="GO:0008855">
    <property type="term" value="F:exodeoxyribonuclease VII activity"/>
    <property type="evidence" value="ECO:0007669"/>
    <property type="project" value="UniProtKB-UniRule"/>
</dbReference>
<dbReference type="GO" id="GO:0003676">
    <property type="term" value="F:nucleic acid binding"/>
    <property type="evidence" value="ECO:0007669"/>
    <property type="project" value="InterPro"/>
</dbReference>
<dbReference type="GO" id="GO:0006308">
    <property type="term" value="P:DNA catabolic process"/>
    <property type="evidence" value="ECO:0007669"/>
    <property type="project" value="UniProtKB-UniRule"/>
</dbReference>
<dbReference type="CDD" id="cd04489">
    <property type="entry name" value="ExoVII_LU_OBF"/>
    <property type="match status" value="1"/>
</dbReference>
<dbReference type="Gene3D" id="2.40.50.1010">
    <property type="match status" value="1"/>
</dbReference>
<dbReference type="HAMAP" id="MF_00378">
    <property type="entry name" value="Exonuc_7_L"/>
    <property type="match status" value="1"/>
</dbReference>
<dbReference type="InterPro" id="IPR003753">
    <property type="entry name" value="Exonuc_VII_L"/>
</dbReference>
<dbReference type="InterPro" id="IPR020579">
    <property type="entry name" value="Exonuc_VII_lsu_C"/>
</dbReference>
<dbReference type="InterPro" id="IPR025824">
    <property type="entry name" value="OB-fold_nuc-bd_dom"/>
</dbReference>
<dbReference type="NCBIfam" id="TIGR00237">
    <property type="entry name" value="xseA"/>
    <property type="match status" value="1"/>
</dbReference>
<dbReference type="PANTHER" id="PTHR30008">
    <property type="entry name" value="EXODEOXYRIBONUCLEASE 7 LARGE SUBUNIT"/>
    <property type="match status" value="1"/>
</dbReference>
<dbReference type="PANTHER" id="PTHR30008:SF0">
    <property type="entry name" value="EXODEOXYRIBONUCLEASE 7 LARGE SUBUNIT"/>
    <property type="match status" value="1"/>
</dbReference>
<dbReference type="Pfam" id="PF02601">
    <property type="entry name" value="Exonuc_VII_L"/>
    <property type="match status" value="1"/>
</dbReference>
<dbReference type="Pfam" id="PF13742">
    <property type="entry name" value="tRNA_anti_2"/>
    <property type="match status" value="1"/>
</dbReference>
<keyword id="KW-0963">Cytoplasm</keyword>
<keyword id="KW-0269">Exonuclease</keyword>
<keyword id="KW-0378">Hydrolase</keyword>
<keyword id="KW-0540">Nuclease</keyword>
<protein>
    <recommendedName>
        <fullName evidence="1">Exodeoxyribonuclease 7 large subunit</fullName>
        <ecNumber evidence="1">3.1.11.6</ecNumber>
    </recommendedName>
    <alternativeName>
        <fullName evidence="1">Exodeoxyribonuclease VII large subunit</fullName>
        <shortName evidence="1">Exonuclease VII large subunit</shortName>
    </alternativeName>
</protein>